<sequence length="152" mass="17186">MNTELDLQIACEFDNLPSEAQFALWADKALSQYRDESELTIVISDEAQSQQLNNDYRGKNKPTNVLSFEFEAPPGIDIPLVGDLVICPAIVLAEAIEQEKSFHDHFAHMVIHGCLHLLGFDHIKSEDAFEMESIEKQLLAELNIADPYRDEI</sequence>
<name>YBEY_PSET1</name>
<reference key="1">
    <citation type="journal article" date="2005" name="Genome Res.">
        <title>Coping with cold: the genome of the versatile marine Antarctica bacterium Pseudoalteromonas haloplanktis TAC125.</title>
        <authorList>
            <person name="Medigue C."/>
            <person name="Krin E."/>
            <person name="Pascal G."/>
            <person name="Barbe V."/>
            <person name="Bernsel A."/>
            <person name="Bertin P.N."/>
            <person name="Cheung F."/>
            <person name="Cruveiller S."/>
            <person name="D'Amico S."/>
            <person name="Duilio A."/>
            <person name="Fang G."/>
            <person name="Feller G."/>
            <person name="Ho C."/>
            <person name="Mangenot S."/>
            <person name="Marino G."/>
            <person name="Nilsson J."/>
            <person name="Parrilli E."/>
            <person name="Rocha E.P.C."/>
            <person name="Rouy Z."/>
            <person name="Sekowska A."/>
            <person name="Tutino M.L."/>
            <person name="Vallenet D."/>
            <person name="von Heijne G."/>
            <person name="Danchin A."/>
        </authorList>
    </citation>
    <scope>NUCLEOTIDE SEQUENCE [LARGE SCALE GENOMIC DNA]</scope>
    <source>
        <strain>TAC 125</strain>
    </source>
</reference>
<accession>Q3IK77</accession>
<protein>
    <recommendedName>
        <fullName evidence="1">Endoribonuclease YbeY</fullName>
        <ecNumber evidence="1">3.1.-.-</ecNumber>
    </recommendedName>
</protein>
<keyword id="KW-0963">Cytoplasm</keyword>
<keyword id="KW-0255">Endonuclease</keyword>
<keyword id="KW-0378">Hydrolase</keyword>
<keyword id="KW-0479">Metal-binding</keyword>
<keyword id="KW-0540">Nuclease</keyword>
<keyword id="KW-1185">Reference proteome</keyword>
<keyword id="KW-0690">Ribosome biogenesis</keyword>
<keyword id="KW-0698">rRNA processing</keyword>
<keyword id="KW-0862">Zinc</keyword>
<comment type="function">
    <text evidence="1">Single strand-specific metallo-endoribonuclease involved in late-stage 70S ribosome quality control and in maturation of the 3' terminus of the 16S rRNA.</text>
</comment>
<comment type="cofactor">
    <cofactor evidence="1">
        <name>Zn(2+)</name>
        <dbReference type="ChEBI" id="CHEBI:29105"/>
    </cofactor>
    <text evidence="1">Binds 1 zinc ion.</text>
</comment>
<comment type="subcellular location">
    <subcellularLocation>
        <location evidence="1">Cytoplasm</location>
    </subcellularLocation>
</comment>
<comment type="similarity">
    <text evidence="1">Belongs to the endoribonuclease YbeY family.</text>
</comment>
<dbReference type="EC" id="3.1.-.-" evidence="1"/>
<dbReference type="EMBL" id="CR954246">
    <property type="protein sequence ID" value="CAI86122.1"/>
    <property type="molecule type" value="Genomic_DNA"/>
</dbReference>
<dbReference type="SMR" id="Q3IK77"/>
<dbReference type="STRING" id="326442.PSHAa1044"/>
<dbReference type="KEGG" id="pha:PSHAa1044"/>
<dbReference type="eggNOG" id="COG0319">
    <property type="taxonomic scope" value="Bacteria"/>
</dbReference>
<dbReference type="HOGENOM" id="CLU_106710_0_1_6"/>
<dbReference type="BioCyc" id="PHAL326442:PSHA_RS05105-MONOMER"/>
<dbReference type="Proteomes" id="UP000006843">
    <property type="component" value="Chromosome I"/>
</dbReference>
<dbReference type="GO" id="GO:0005737">
    <property type="term" value="C:cytoplasm"/>
    <property type="evidence" value="ECO:0007669"/>
    <property type="project" value="UniProtKB-SubCell"/>
</dbReference>
<dbReference type="GO" id="GO:0004222">
    <property type="term" value="F:metalloendopeptidase activity"/>
    <property type="evidence" value="ECO:0007669"/>
    <property type="project" value="InterPro"/>
</dbReference>
<dbReference type="GO" id="GO:0004521">
    <property type="term" value="F:RNA endonuclease activity"/>
    <property type="evidence" value="ECO:0007669"/>
    <property type="project" value="UniProtKB-UniRule"/>
</dbReference>
<dbReference type="GO" id="GO:0008270">
    <property type="term" value="F:zinc ion binding"/>
    <property type="evidence" value="ECO:0007669"/>
    <property type="project" value="UniProtKB-UniRule"/>
</dbReference>
<dbReference type="GO" id="GO:0006364">
    <property type="term" value="P:rRNA processing"/>
    <property type="evidence" value="ECO:0007669"/>
    <property type="project" value="UniProtKB-UniRule"/>
</dbReference>
<dbReference type="Gene3D" id="3.40.390.30">
    <property type="entry name" value="Metalloproteases ('zincins'), catalytic domain"/>
    <property type="match status" value="1"/>
</dbReference>
<dbReference type="HAMAP" id="MF_00009">
    <property type="entry name" value="Endoribonucl_YbeY"/>
    <property type="match status" value="1"/>
</dbReference>
<dbReference type="InterPro" id="IPR023091">
    <property type="entry name" value="MetalPrtase_cat_dom_sf_prd"/>
</dbReference>
<dbReference type="InterPro" id="IPR002036">
    <property type="entry name" value="YbeY"/>
</dbReference>
<dbReference type="InterPro" id="IPR020549">
    <property type="entry name" value="YbeY_CS"/>
</dbReference>
<dbReference type="NCBIfam" id="TIGR00043">
    <property type="entry name" value="rRNA maturation RNase YbeY"/>
    <property type="match status" value="1"/>
</dbReference>
<dbReference type="PANTHER" id="PTHR46986">
    <property type="entry name" value="ENDORIBONUCLEASE YBEY, CHLOROPLASTIC"/>
    <property type="match status" value="1"/>
</dbReference>
<dbReference type="PANTHER" id="PTHR46986:SF1">
    <property type="entry name" value="ENDORIBONUCLEASE YBEY, CHLOROPLASTIC"/>
    <property type="match status" value="1"/>
</dbReference>
<dbReference type="Pfam" id="PF02130">
    <property type="entry name" value="YbeY"/>
    <property type="match status" value="1"/>
</dbReference>
<dbReference type="SUPFAM" id="SSF55486">
    <property type="entry name" value="Metalloproteases ('zincins'), catalytic domain"/>
    <property type="match status" value="1"/>
</dbReference>
<dbReference type="PROSITE" id="PS01306">
    <property type="entry name" value="UPF0054"/>
    <property type="match status" value="1"/>
</dbReference>
<proteinExistence type="inferred from homology"/>
<organism>
    <name type="scientific">Pseudoalteromonas translucida (strain TAC 125)</name>
    <dbReference type="NCBI Taxonomy" id="326442"/>
    <lineage>
        <taxon>Bacteria</taxon>
        <taxon>Pseudomonadati</taxon>
        <taxon>Pseudomonadota</taxon>
        <taxon>Gammaproteobacteria</taxon>
        <taxon>Alteromonadales</taxon>
        <taxon>Pseudoalteromonadaceae</taxon>
        <taxon>Pseudoalteromonas</taxon>
    </lineage>
</organism>
<gene>
    <name evidence="1" type="primary">ybeY</name>
    <name type="ordered locus">PSHAa1044</name>
</gene>
<evidence type="ECO:0000255" key="1">
    <source>
        <dbReference type="HAMAP-Rule" id="MF_00009"/>
    </source>
</evidence>
<feature type="chain" id="PRO_0000284274" description="Endoribonuclease YbeY">
    <location>
        <begin position="1"/>
        <end position="152"/>
    </location>
</feature>
<feature type="binding site" evidence="1">
    <location>
        <position position="112"/>
    </location>
    <ligand>
        <name>Zn(2+)</name>
        <dbReference type="ChEBI" id="CHEBI:29105"/>
        <note>catalytic</note>
    </ligand>
</feature>
<feature type="binding site" evidence="1">
    <location>
        <position position="116"/>
    </location>
    <ligand>
        <name>Zn(2+)</name>
        <dbReference type="ChEBI" id="CHEBI:29105"/>
        <note>catalytic</note>
    </ligand>
</feature>
<feature type="binding site" evidence="1">
    <location>
        <position position="122"/>
    </location>
    <ligand>
        <name>Zn(2+)</name>
        <dbReference type="ChEBI" id="CHEBI:29105"/>
        <note>catalytic</note>
    </ligand>
</feature>